<keyword id="KW-1185">Reference proteome</keyword>
<proteinExistence type="predicted"/>
<name>Y644_METJA</name>
<reference key="1">
    <citation type="journal article" date="1996" name="Science">
        <title>Complete genome sequence of the methanogenic archaeon, Methanococcus jannaschii.</title>
        <authorList>
            <person name="Bult C.J."/>
            <person name="White O."/>
            <person name="Olsen G.J."/>
            <person name="Zhou L."/>
            <person name="Fleischmann R.D."/>
            <person name="Sutton G.G."/>
            <person name="Blake J.A."/>
            <person name="FitzGerald L.M."/>
            <person name="Clayton R.A."/>
            <person name="Gocayne J.D."/>
            <person name="Kerlavage A.R."/>
            <person name="Dougherty B.A."/>
            <person name="Tomb J.-F."/>
            <person name="Adams M.D."/>
            <person name="Reich C.I."/>
            <person name="Overbeek R."/>
            <person name="Kirkness E.F."/>
            <person name="Weinstock K.G."/>
            <person name="Merrick J.M."/>
            <person name="Glodek A."/>
            <person name="Scott J.L."/>
            <person name="Geoghagen N.S.M."/>
            <person name="Weidman J.F."/>
            <person name="Fuhrmann J.L."/>
            <person name="Nguyen D."/>
            <person name="Utterback T.R."/>
            <person name="Kelley J.M."/>
            <person name="Peterson J.D."/>
            <person name="Sadow P.W."/>
            <person name="Hanna M.C."/>
            <person name="Cotton M.D."/>
            <person name="Roberts K.M."/>
            <person name="Hurst M.A."/>
            <person name="Kaine B.P."/>
            <person name="Borodovsky M."/>
            <person name="Klenk H.-P."/>
            <person name="Fraser C.M."/>
            <person name="Smith H.O."/>
            <person name="Woese C.R."/>
            <person name="Venter J.C."/>
        </authorList>
    </citation>
    <scope>NUCLEOTIDE SEQUENCE [LARGE SCALE GENOMIC DNA]</scope>
    <source>
        <strain>ATCC 43067 / DSM 2661 / JAL-1 / JCM 10045 / NBRC 100440</strain>
    </source>
</reference>
<protein>
    <recommendedName>
        <fullName>Uncharacterized protein MJ0644</fullName>
    </recommendedName>
</protein>
<feature type="chain" id="PRO_0000106969" description="Uncharacterized protein MJ0644">
    <location>
        <begin position="1"/>
        <end position="208"/>
    </location>
</feature>
<dbReference type="EMBL" id="L77117">
    <property type="protein sequence ID" value="AAB98638.1"/>
    <property type="molecule type" value="Genomic_DNA"/>
</dbReference>
<dbReference type="PIR" id="D64380">
    <property type="entry name" value="D64380"/>
</dbReference>
<dbReference type="SMR" id="Q58060"/>
<dbReference type="FunCoup" id="Q58060">
    <property type="interactions" value="163"/>
</dbReference>
<dbReference type="STRING" id="243232.MJ_0644"/>
<dbReference type="PaxDb" id="243232-MJ_0644"/>
<dbReference type="EnsemblBacteria" id="AAB98638">
    <property type="protein sequence ID" value="AAB98638"/>
    <property type="gene ID" value="MJ_0644"/>
</dbReference>
<dbReference type="KEGG" id="mja:MJ_0644"/>
<dbReference type="eggNOG" id="arCOG00117">
    <property type="taxonomic scope" value="Archaea"/>
</dbReference>
<dbReference type="HOGENOM" id="CLU_072626_3_1_2"/>
<dbReference type="InParanoid" id="Q58060"/>
<dbReference type="PhylomeDB" id="Q58060"/>
<dbReference type="Proteomes" id="UP000000805">
    <property type="component" value="Chromosome"/>
</dbReference>
<dbReference type="GO" id="GO:0047443">
    <property type="term" value="F:4-hydroxy-4-methyl-2-oxoglutarate aldolase activity"/>
    <property type="evidence" value="ECO:0000318"/>
    <property type="project" value="GO_Central"/>
</dbReference>
<dbReference type="GO" id="GO:0008948">
    <property type="term" value="F:oxaloacetate decarboxylase activity"/>
    <property type="evidence" value="ECO:0000318"/>
    <property type="project" value="GO_Central"/>
</dbReference>
<dbReference type="CDD" id="cd16841">
    <property type="entry name" value="RraA_family"/>
    <property type="match status" value="1"/>
</dbReference>
<dbReference type="Gene3D" id="3.50.30.40">
    <property type="entry name" value="Ribonuclease E inhibitor RraA/RraA-like"/>
    <property type="match status" value="1"/>
</dbReference>
<dbReference type="InterPro" id="IPR005493">
    <property type="entry name" value="RraA/RraA-like"/>
</dbReference>
<dbReference type="InterPro" id="IPR036704">
    <property type="entry name" value="RraA/RraA-like_sf"/>
</dbReference>
<dbReference type="PANTHER" id="PTHR33254">
    <property type="entry name" value="4-HYDROXY-4-METHYL-2-OXOGLUTARATE ALDOLASE 3-RELATED"/>
    <property type="match status" value="1"/>
</dbReference>
<dbReference type="PANTHER" id="PTHR33254:SF4">
    <property type="entry name" value="4-HYDROXY-4-METHYL-2-OXOGLUTARATE ALDOLASE 3-RELATED"/>
    <property type="match status" value="1"/>
</dbReference>
<dbReference type="Pfam" id="PF03737">
    <property type="entry name" value="RraA-like"/>
    <property type="match status" value="1"/>
</dbReference>
<dbReference type="SUPFAM" id="SSF89562">
    <property type="entry name" value="RraA-like"/>
    <property type="match status" value="1"/>
</dbReference>
<accession>Q58060</accession>
<sequence length="208" mass="22709">MKVLLKIIVGRAMNILKNFSVPNLCDAGAKPLNGIKPILENQKLVFGEAITVKISYNDWGTLIKTISFAKNKFIVAEVVGEGKYETAVWGGLASLNAKIKGVRGVVIDGCVRDVEDIKALKFPVFAKNFCPNAGKPLNLGEINVAVNCCGVIVEPGDIIVGDCNGVVVIKKESLPEIIENAKNIKEKERKIRERILRGQDLRDVLNLE</sequence>
<organism>
    <name type="scientific">Methanocaldococcus jannaschii (strain ATCC 43067 / DSM 2661 / JAL-1 / JCM 10045 / NBRC 100440)</name>
    <name type="common">Methanococcus jannaschii</name>
    <dbReference type="NCBI Taxonomy" id="243232"/>
    <lineage>
        <taxon>Archaea</taxon>
        <taxon>Methanobacteriati</taxon>
        <taxon>Methanobacteriota</taxon>
        <taxon>Methanomada group</taxon>
        <taxon>Methanococci</taxon>
        <taxon>Methanococcales</taxon>
        <taxon>Methanocaldococcaceae</taxon>
        <taxon>Methanocaldococcus</taxon>
    </lineage>
</organism>
<gene>
    <name type="ordered locus">MJ0644</name>
</gene>